<dbReference type="EMBL" id="M26249">
    <property type="protein sequence ID" value="AAA31197.1"/>
    <property type="molecule type" value="Genomic_DNA"/>
</dbReference>
<dbReference type="SMR" id="P23043"/>
<dbReference type="GlyCosmos" id="P23043">
    <property type="glycosylation" value="4 sites, No reported glycans"/>
</dbReference>
<dbReference type="GO" id="GO:0016323">
    <property type="term" value="C:basolateral plasma membrane"/>
    <property type="evidence" value="ECO:0007669"/>
    <property type="project" value="UniProtKB-SubCell"/>
</dbReference>
<dbReference type="GO" id="GO:0005789">
    <property type="term" value="C:endoplasmic reticulum membrane"/>
    <property type="evidence" value="ECO:0007669"/>
    <property type="project" value="UniProtKB-SubCell"/>
</dbReference>
<dbReference type="GO" id="GO:0010008">
    <property type="term" value="C:endosome membrane"/>
    <property type="evidence" value="ECO:0007669"/>
    <property type="project" value="UniProtKB-SubCell"/>
</dbReference>
<dbReference type="GO" id="GO:0009897">
    <property type="term" value="C:external side of plasma membrane"/>
    <property type="evidence" value="ECO:0007669"/>
    <property type="project" value="TreeGrafter"/>
</dbReference>
<dbReference type="GO" id="GO:0005615">
    <property type="term" value="C:extracellular space"/>
    <property type="evidence" value="ECO:0007669"/>
    <property type="project" value="TreeGrafter"/>
</dbReference>
<dbReference type="GO" id="GO:0005765">
    <property type="term" value="C:lysosomal membrane"/>
    <property type="evidence" value="ECO:0007669"/>
    <property type="project" value="UniProtKB-SubCell"/>
</dbReference>
<dbReference type="GO" id="GO:0005764">
    <property type="term" value="C:lysosome"/>
    <property type="evidence" value="ECO:0000250"/>
    <property type="project" value="UniProtKB"/>
</dbReference>
<dbReference type="GO" id="GO:0030883">
    <property type="term" value="F:endogenous lipid antigen binding"/>
    <property type="evidence" value="ECO:0007669"/>
    <property type="project" value="TreeGrafter"/>
</dbReference>
<dbReference type="GO" id="GO:0030884">
    <property type="term" value="F:exogenous lipid antigen binding"/>
    <property type="evidence" value="ECO:0007669"/>
    <property type="project" value="TreeGrafter"/>
</dbReference>
<dbReference type="GO" id="GO:0030882">
    <property type="term" value="F:lipid antigen binding"/>
    <property type="evidence" value="ECO:0000250"/>
    <property type="project" value="UniProtKB"/>
</dbReference>
<dbReference type="GO" id="GO:0071723">
    <property type="term" value="F:lipopeptide binding"/>
    <property type="evidence" value="ECO:0007669"/>
    <property type="project" value="TreeGrafter"/>
</dbReference>
<dbReference type="GO" id="GO:0048006">
    <property type="term" value="P:antigen processing and presentation, endogenous lipid antigen via MHC class Ib"/>
    <property type="evidence" value="ECO:0007669"/>
    <property type="project" value="TreeGrafter"/>
</dbReference>
<dbReference type="GO" id="GO:0048007">
    <property type="term" value="P:antigen processing and presentation, exogenous lipid antigen via MHC class Ib"/>
    <property type="evidence" value="ECO:0007669"/>
    <property type="project" value="TreeGrafter"/>
</dbReference>
<dbReference type="GO" id="GO:0045087">
    <property type="term" value="P:innate immune response"/>
    <property type="evidence" value="ECO:0007669"/>
    <property type="project" value="UniProtKB-KW"/>
</dbReference>
<dbReference type="GO" id="GO:0001916">
    <property type="term" value="P:positive regulation of T cell mediated cytotoxicity"/>
    <property type="evidence" value="ECO:0007669"/>
    <property type="project" value="TreeGrafter"/>
</dbReference>
<dbReference type="CDD" id="cd21029">
    <property type="entry name" value="IgC1_CD1"/>
    <property type="match status" value="1"/>
</dbReference>
<dbReference type="FunFam" id="2.60.40.10:FF:000254">
    <property type="entry name" value="Antigen-presenting glycoprotein CD1d1"/>
    <property type="match status" value="1"/>
</dbReference>
<dbReference type="FunFam" id="3.30.500.10:FF:000002">
    <property type="entry name" value="Antigen-presenting glycoprotein CD1d1"/>
    <property type="match status" value="1"/>
</dbReference>
<dbReference type="Gene3D" id="2.60.40.10">
    <property type="entry name" value="Immunoglobulins"/>
    <property type="match status" value="1"/>
</dbReference>
<dbReference type="Gene3D" id="3.30.500.10">
    <property type="entry name" value="MHC class I-like antigen recognition-like"/>
    <property type="match status" value="1"/>
</dbReference>
<dbReference type="InterPro" id="IPR007110">
    <property type="entry name" value="Ig-like_dom"/>
</dbReference>
<dbReference type="InterPro" id="IPR036179">
    <property type="entry name" value="Ig-like_dom_sf"/>
</dbReference>
<dbReference type="InterPro" id="IPR013783">
    <property type="entry name" value="Ig-like_fold"/>
</dbReference>
<dbReference type="InterPro" id="IPR003597">
    <property type="entry name" value="Ig_C1-set"/>
</dbReference>
<dbReference type="InterPro" id="IPR050208">
    <property type="entry name" value="MHC_class-I_related"/>
</dbReference>
<dbReference type="InterPro" id="IPR011161">
    <property type="entry name" value="MHC_I-like_Ag-recog"/>
</dbReference>
<dbReference type="InterPro" id="IPR037055">
    <property type="entry name" value="MHC_I-like_Ag-recog_sf"/>
</dbReference>
<dbReference type="InterPro" id="IPR011162">
    <property type="entry name" value="MHC_I/II-like_Ag-recog"/>
</dbReference>
<dbReference type="PANTHER" id="PTHR16675:SF175">
    <property type="entry name" value="ANTIGEN-PRESENTING GLYCOPROTEIN CD1D"/>
    <property type="match status" value="1"/>
</dbReference>
<dbReference type="PANTHER" id="PTHR16675">
    <property type="entry name" value="MHC CLASS I-RELATED"/>
    <property type="match status" value="1"/>
</dbReference>
<dbReference type="Pfam" id="PF07654">
    <property type="entry name" value="C1-set"/>
    <property type="match status" value="1"/>
</dbReference>
<dbReference type="Pfam" id="PF16497">
    <property type="entry name" value="MHC_I_3"/>
    <property type="match status" value="1"/>
</dbReference>
<dbReference type="SMART" id="SM00407">
    <property type="entry name" value="IGc1"/>
    <property type="match status" value="1"/>
</dbReference>
<dbReference type="SUPFAM" id="SSF48726">
    <property type="entry name" value="Immunoglobulin"/>
    <property type="match status" value="1"/>
</dbReference>
<dbReference type="SUPFAM" id="SSF54452">
    <property type="entry name" value="MHC antigen-recognition domain"/>
    <property type="match status" value="1"/>
</dbReference>
<dbReference type="PROSITE" id="PS50835">
    <property type="entry name" value="IG_LIKE"/>
    <property type="match status" value="1"/>
</dbReference>
<evidence type="ECO:0000250" key="1"/>
<evidence type="ECO:0000250" key="2">
    <source>
        <dbReference type="UniProtKB" id="P15813"/>
    </source>
</evidence>
<evidence type="ECO:0000255" key="3"/>
<evidence type="ECO:0000255" key="4">
    <source>
        <dbReference type="PROSITE-ProRule" id="PRU00114"/>
    </source>
</evidence>
<proteinExistence type="evidence at transcript level"/>
<sequence>LQRSFPFHGLQISSFVNSSQTRTDCLAWLGELQTHSWSNDSDTIHFLKPWSQGTFNFQQWEQVQNELWVYRLSVTRDIHDFVKLLKLTYPIELQVFAGCEMHPGNTSESFFHVAYQGMHVLSFRGTLWETAPGTPPFVKLVVKELNLDHGTREMIQELLNNTCPQFVSGLIEAGRSELEKQVKPEAWLSSGPSPGPGRLLLVCRVSGFYPKPVQVMWMRGDQEQPHTRQGDFLPNADGTWYLRVTLDVAAGDAAGLSCRVKHSSLGGQDIYPVLG</sequence>
<reference key="1">
    <citation type="journal article" date="1989" name="Immunogenetics">
        <title>The rabbit CD1 and the evolutionary conservation of the CD1 gene family.</title>
        <authorList>
            <person name="Calabi F."/>
            <person name="Belt K.T."/>
            <person name="Yu C.Y."/>
            <person name="Bradbury A."/>
            <person name="Mandy W.J."/>
            <person name="Milstein C."/>
        </authorList>
    </citation>
    <scope>NUCLEOTIDE SEQUENCE [GENOMIC DNA]</scope>
</reference>
<gene>
    <name type="primary">CD1D</name>
    <name type="synonym">CD1</name>
</gene>
<organism>
    <name type="scientific">Sylvilagus floridanus</name>
    <name type="common">Cottontail rabbit</name>
    <dbReference type="NCBI Taxonomy" id="9988"/>
    <lineage>
        <taxon>Eukaryota</taxon>
        <taxon>Metazoa</taxon>
        <taxon>Chordata</taxon>
        <taxon>Craniata</taxon>
        <taxon>Vertebrata</taxon>
        <taxon>Euteleostomi</taxon>
        <taxon>Mammalia</taxon>
        <taxon>Eutheria</taxon>
        <taxon>Euarchontoglires</taxon>
        <taxon>Glires</taxon>
        <taxon>Lagomorpha</taxon>
        <taxon>Leporidae</taxon>
        <taxon>Sylvilagus</taxon>
    </lineage>
</organism>
<protein>
    <recommendedName>
        <fullName>Antigen-presenting glycoprotein CD1d</fullName>
    </recommendedName>
    <alternativeName>
        <fullName>Leukocyte differentiation-like antigen Ta</fullName>
    </alternativeName>
    <cdAntigenName>CD1d</cdAntigenName>
</protein>
<name>CD1D_SYLFL</name>
<keyword id="KW-1003">Cell membrane</keyword>
<keyword id="KW-1015">Disulfide bond</keyword>
<keyword id="KW-0256">Endoplasmic reticulum</keyword>
<keyword id="KW-0967">Endosome</keyword>
<keyword id="KW-0325">Glycoprotein</keyword>
<keyword id="KW-0391">Immunity</keyword>
<keyword id="KW-0393">Immunoglobulin domain</keyword>
<keyword id="KW-0399">Innate immunity</keyword>
<keyword id="KW-0458">Lysosome</keyword>
<keyword id="KW-0472">Membrane</keyword>
<accession>P23043</accession>
<comment type="function">
    <text evidence="1">Antigen-presenting protein that binds self and non-self glycolipids and presents them to T-cell receptors on natural killer T-cells.</text>
</comment>
<comment type="subunit">
    <text evidence="1">Heterodimer with B2M (beta-2-microglobulin). Interacts with MHC II and CD74 (By similarity).</text>
</comment>
<comment type="subcellular location">
    <subcellularLocation>
        <location evidence="2">Cell membrane</location>
        <topology evidence="2">Single-pass type I membrane protein</topology>
    </subcellularLocation>
    <subcellularLocation>
        <location evidence="2">Basolateral cell membrane</location>
        <topology evidence="2">Single-pass type I membrane protein</topology>
    </subcellularLocation>
    <subcellularLocation>
        <location evidence="2">Endosome membrane</location>
        <topology evidence="2">Single-pass type I membrane protein</topology>
    </subcellularLocation>
    <subcellularLocation>
        <location evidence="2">Lysosome membrane</location>
        <topology evidence="2">Single-pass type I membrane protein</topology>
    </subcellularLocation>
    <subcellularLocation>
        <location evidence="2">Endoplasmic reticulum membrane</location>
        <topology evidence="2">Single-pass type I membrane protein</topology>
    </subcellularLocation>
    <text evidence="2">Subject to intracellular trafficking between the cell membrane, endosomes and lysosomes.</text>
</comment>
<comment type="tissue specificity">
    <text>Expressed on cortical thymocytes, on certain T-cell leukemias, and in various other tissues.</text>
</comment>
<comment type="miscellaneous">
    <text evidence="1">During protein synthesis and maturation, CD1 family members bind endogenous lipids that are replaced by lipid or glycolipid antigens when the proteins are internalized and pass through endosomes, before trafficking back to the cell surface.</text>
</comment>
<feature type="chain" id="PRO_0000072671" description="Antigen-presenting glycoprotein CD1d">
    <location>
        <begin position="1" status="less than"/>
        <end position="275" status="greater than"/>
    </location>
</feature>
<feature type="domain" description="Ig-like">
    <location>
        <begin position="164"/>
        <end position="274"/>
    </location>
</feature>
<feature type="binding site" evidence="2">
    <location>
        <position position="77"/>
    </location>
    <ligand>
        <name>a D-galactosylceramide</name>
        <dbReference type="ChEBI" id="CHEBI:36498"/>
    </ligand>
</feature>
<feature type="binding site" evidence="2">
    <location>
        <begin position="148"/>
        <end position="151"/>
    </location>
    <ligand>
        <name>a D-galactosylceramide</name>
        <dbReference type="ChEBI" id="CHEBI:36498"/>
    </ligand>
</feature>
<feature type="binding site" evidence="1">
    <location>
        <position position="148"/>
    </location>
    <ligand>
        <name>a D-galactosylceramide</name>
        <dbReference type="ChEBI" id="CHEBI:36498"/>
    </ligand>
</feature>
<feature type="binding site" evidence="1">
    <location>
        <position position="151"/>
    </location>
    <ligand>
        <name>a D-galactosylceramide</name>
        <dbReference type="ChEBI" id="CHEBI:36498"/>
    </ligand>
</feature>
<feature type="glycosylation site" description="N-linked (GlcNAc...) asparagine" evidence="3">
    <location>
        <position position="17"/>
    </location>
</feature>
<feature type="glycosylation site" description="N-linked (GlcNAc...) asparagine" evidence="3">
    <location>
        <position position="39"/>
    </location>
</feature>
<feature type="glycosylation site" description="N-linked (GlcNAc...) asparagine" evidence="3">
    <location>
        <position position="105"/>
    </location>
</feature>
<feature type="glycosylation site" description="N-linked (GlcNAc...) asparagine" evidence="3">
    <location>
        <position position="160"/>
    </location>
</feature>
<feature type="disulfide bond" evidence="4">
    <location>
        <begin position="99"/>
        <end position="163"/>
    </location>
</feature>
<feature type="disulfide bond" evidence="4">
    <location>
        <begin position="203"/>
        <end position="258"/>
    </location>
</feature>
<feature type="non-terminal residue">
    <location>
        <position position="1"/>
    </location>
</feature>
<feature type="non-terminal residue">
    <location>
        <position position="275"/>
    </location>
</feature>